<gene>
    <name type="primary">Gdf1</name>
    <name type="synonym">Gdf-1</name>
</gene>
<feature type="signal peptide" evidence="2">
    <location>
        <begin position="1"/>
        <end position="23"/>
    </location>
</feature>
<feature type="propeptide" id="PRO_0000033900" evidence="2">
    <location>
        <begin position="24"/>
        <end position="237"/>
    </location>
</feature>
<feature type="chain" id="PRO_0000033901" description="Embryonic growth/differentiation factor 1">
    <location>
        <begin position="238"/>
        <end position="357"/>
    </location>
</feature>
<feature type="glycosylation site" description="N-linked (GlcNAc...) asparagine" evidence="2">
    <location>
        <position position="191"/>
    </location>
</feature>
<feature type="disulfide bond" evidence="1">
    <location>
        <begin position="251"/>
        <end position="322"/>
    </location>
</feature>
<feature type="disulfide bond" evidence="1">
    <location>
        <begin position="280"/>
        <end position="354"/>
    </location>
</feature>
<feature type="disulfide bond" evidence="1">
    <location>
        <begin position="284"/>
        <end position="356"/>
    </location>
</feature>
<feature type="disulfide bond" description="Interchain" evidence="1">
    <location>
        <position position="321"/>
    </location>
</feature>
<feature type="sequence conflict" description="In Ref. 1; AAA37674." evidence="3" ref="1">
    <original>S</original>
    <variation>C</variation>
    <location>
        <position position="145"/>
    </location>
</feature>
<dbReference type="EMBL" id="M57639">
    <property type="protein sequence ID" value="AAA37674.1"/>
    <property type="molecule type" value="mRNA"/>
</dbReference>
<dbReference type="EMBL" id="M62301">
    <property type="protein sequence ID" value="AAA37676.1"/>
    <property type="molecule type" value="mRNA"/>
</dbReference>
<dbReference type="EMBL" id="BC079555">
    <property type="protein sequence ID" value="AAH79555.1"/>
    <property type="molecule type" value="mRNA"/>
</dbReference>
<dbReference type="CCDS" id="CCDS52571.1"/>
<dbReference type="PIR" id="A39364">
    <property type="entry name" value="A39364"/>
</dbReference>
<dbReference type="RefSeq" id="NP_001156754.1">
    <property type="nucleotide sequence ID" value="NM_001163282.2"/>
</dbReference>
<dbReference type="RefSeq" id="NP_032133.2">
    <property type="nucleotide sequence ID" value="NM_008107.4"/>
</dbReference>
<dbReference type="SMR" id="P20863"/>
<dbReference type="FunCoup" id="P20863">
    <property type="interactions" value="663"/>
</dbReference>
<dbReference type="STRING" id="10090.ENSMUSP00000128325"/>
<dbReference type="GlyCosmos" id="P20863">
    <property type="glycosylation" value="1 site, No reported glycans"/>
</dbReference>
<dbReference type="GlyGen" id="P20863">
    <property type="glycosylation" value="2 sites"/>
</dbReference>
<dbReference type="PhosphoSitePlus" id="P20863"/>
<dbReference type="PaxDb" id="10090-ENSMUSP00000045892"/>
<dbReference type="DNASU" id="14559"/>
<dbReference type="Ensembl" id="ENSMUST00000165819.9">
    <property type="protein sequence ID" value="ENSMUSP00000128325.3"/>
    <property type="gene ID" value="ENSMUSG00000087408.11"/>
</dbReference>
<dbReference type="Ensembl" id="ENSMUST00000207684.2">
    <property type="protein sequence ID" value="ENSMUSP00000146749.2"/>
    <property type="gene ID" value="ENSMUSG00000109523.2"/>
</dbReference>
<dbReference type="GeneID" id="14559"/>
<dbReference type="KEGG" id="mmu:14559"/>
<dbReference type="UCSC" id="uc009lzz.4">
    <property type="organism name" value="mouse"/>
</dbReference>
<dbReference type="AGR" id="MGI:95683"/>
<dbReference type="CTD" id="2657"/>
<dbReference type="MGI" id="MGI:95683">
    <property type="gene designation" value="Gdf1"/>
</dbReference>
<dbReference type="VEuPathDB" id="HostDB:ENSMUSG00000087408"/>
<dbReference type="VEuPathDB" id="HostDB:ENSMUSG00000109523"/>
<dbReference type="eggNOG" id="KOG3900">
    <property type="taxonomic scope" value="Eukaryota"/>
</dbReference>
<dbReference type="GeneTree" id="ENSGT00940000162926"/>
<dbReference type="HOGENOM" id="CLU_020515_4_0_1"/>
<dbReference type="InParanoid" id="P20863"/>
<dbReference type="OMA" id="AGHCPEW"/>
<dbReference type="OrthoDB" id="5987191at2759"/>
<dbReference type="PhylomeDB" id="P20863"/>
<dbReference type="TreeFam" id="TF351789"/>
<dbReference type="BioGRID-ORCS" id="14559">
    <property type="hits" value="3 hits in 29 CRISPR screens"/>
</dbReference>
<dbReference type="ChiTaRS" id="Gdf1">
    <property type="organism name" value="mouse"/>
</dbReference>
<dbReference type="PRO" id="PR:P20863"/>
<dbReference type="Proteomes" id="UP000000589">
    <property type="component" value="Chromosome 8"/>
</dbReference>
<dbReference type="RNAct" id="P20863">
    <property type="molecule type" value="protein"/>
</dbReference>
<dbReference type="Bgee" id="ENSMUSG00000087408">
    <property type="expression patterns" value="Expressed in striatum and 45 other cell types or tissues"/>
</dbReference>
<dbReference type="ExpressionAtlas" id="P20863">
    <property type="expression patterns" value="baseline and differential"/>
</dbReference>
<dbReference type="GO" id="GO:0005576">
    <property type="term" value="C:extracellular region"/>
    <property type="evidence" value="ECO:0000304"/>
    <property type="project" value="Reactome"/>
</dbReference>
<dbReference type="GO" id="GO:0005615">
    <property type="term" value="C:extracellular space"/>
    <property type="evidence" value="ECO:0007669"/>
    <property type="project" value="UniProtKB-KW"/>
</dbReference>
<dbReference type="GO" id="GO:0005125">
    <property type="term" value="F:cytokine activity"/>
    <property type="evidence" value="ECO:0007669"/>
    <property type="project" value="UniProtKB-KW"/>
</dbReference>
<dbReference type="GO" id="GO:0008083">
    <property type="term" value="F:growth factor activity"/>
    <property type="evidence" value="ECO:0007669"/>
    <property type="project" value="UniProtKB-KW"/>
</dbReference>
<dbReference type="GO" id="GO:0007492">
    <property type="term" value="P:endoderm development"/>
    <property type="evidence" value="ECO:0000316"/>
    <property type="project" value="MGI"/>
</dbReference>
<dbReference type="GO" id="GO:0001701">
    <property type="term" value="P:in utero embryonic development"/>
    <property type="evidence" value="ECO:0000315"/>
    <property type="project" value="MGI"/>
</dbReference>
<dbReference type="GO" id="GO:0007498">
    <property type="term" value="P:mesoderm development"/>
    <property type="evidence" value="ECO:0000316"/>
    <property type="project" value="MGI"/>
</dbReference>
<dbReference type="GO" id="GO:0007165">
    <property type="term" value="P:signal transduction"/>
    <property type="evidence" value="ECO:0000315"/>
    <property type="project" value="MGI"/>
</dbReference>
<dbReference type="FunFam" id="2.10.90.10:FF:000001">
    <property type="entry name" value="Bone morphogenetic protein 4"/>
    <property type="match status" value="1"/>
</dbReference>
<dbReference type="Gene3D" id="2.10.90.10">
    <property type="entry name" value="Cystine-knot cytokines"/>
    <property type="match status" value="1"/>
</dbReference>
<dbReference type="InterPro" id="IPR029034">
    <property type="entry name" value="Cystine-knot_cytokine"/>
</dbReference>
<dbReference type="InterPro" id="IPR001839">
    <property type="entry name" value="TGF-b_C"/>
</dbReference>
<dbReference type="InterPro" id="IPR015615">
    <property type="entry name" value="TGF-beta-rel"/>
</dbReference>
<dbReference type="InterPro" id="IPR017948">
    <property type="entry name" value="TGFb_CS"/>
</dbReference>
<dbReference type="PANTHER" id="PTHR11848:SF151">
    <property type="entry name" value="EMBRYONIC GROWTH_DIFFERENTIATION FACTOR 1"/>
    <property type="match status" value="1"/>
</dbReference>
<dbReference type="PANTHER" id="PTHR11848">
    <property type="entry name" value="TGF-BETA FAMILY"/>
    <property type="match status" value="1"/>
</dbReference>
<dbReference type="Pfam" id="PF00019">
    <property type="entry name" value="TGF_beta"/>
    <property type="match status" value="1"/>
</dbReference>
<dbReference type="PRINTS" id="PR00669">
    <property type="entry name" value="INHIBINA"/>
</dbReference>
<dbReference type="SMART" id="SM00204">
    <property type="entry name" value="TGFB"/>
    <property type="match status" value="1"/>
</dbReference>
<dbReference type="SUPFAM" id="SSF57501">
    <property type="entry name" value="Cystine-knot cytokines"/>
    <property type="match status" value="1"/>
</dbReference>
<dbReference type="PROSITE" id="PS00250">
    <property type="entry name" value="TGF_BETA_1"/>
    <property type="match status" value="1"/>
</dbReference>
<dbReference type="PROSITE" id="PS51362">
    <property type="entry name" value="TGF_BETA_2"/>
    <property type="match status" value="1"/>
</dbReference>
<name>GDF1_MOUSE</name>
<comment type="function">
    <text>May mediate cell differentiation events during embryonic development.</text>
</comment>
<comment type="subunit">
    <text evidence="1">Homodimer; disulfide-linked.</text>
</comment>
<comment type="subcellular location">
    <subcellularLocation>
        <location>Secreted</location>
    </subcellularLocation>
</comment>
<comment type="tissue specificity">
    <text>Expressed almost exclusively in the nervous system.</text>
</comment>
<comment type="miscellaneous">
    <text>This protein is produced by a bicistronic gene which also produces the CERS1 protein from a non-overlapping reading frame.</text>
</comment>
<comment type="similarity">
    <text evidence="3">Belongs to the TGF-beta family.</text>
</comment>
<keyword id="KW-0165">Cleavage on pair of basic residues</keyword>
<keyword id="KW-0202">Cytokine</keyword>
<keyword id="KW-1015">Disulfide bond</keyword>
<keyword id="KW-0325">Glycoprotein</keyword>
<keyword id="KW-0339">Growth factor</keyword>
<keyword id="KW-1185">Reference proteome</keyword>
<keyword id="KW-0964">Secreted</keyword>
<keyword id="KW-0732">Signal</keyword>
<organism>
    <name type="scientific">Mus musculus</name>
    <name type="common">Mouse</name>
    <dbReference type="NCBI Taxonomy" id="10090"/>
    <lineage>
        <taxon>Eukaryota</taxon>
        <taxon>Metazoa</taxon>
        <taxon>Chordata</taxon>
        <taxon>Craniata</taxon>
        <taxon>Vertebrata</taxon>
        <taxon>Euteleostomi</taxon>
        <taxon>Mammalia</taxon>
        <taxon>Eutheria</taxon>
        <taxon>Euarchontoglires</taxon>
        <taxon>Glires</taxon>
        <taxon>Rodentia</taxon>
        <taxon>Myomorpha</taxon>
        <taxon>Muroidea</taxon>
        <taxon>Muridae</taxon>
        <taxon>Murinae</taxon>
        <taxon>Mus</taxon>
        <taxon>Mus</taxon>
    </lineage>
</organism>
<protein>
    <recommendedName>
        <fullName>Embryonic growth/differentiation factor 1</fullName>
        <shortName>GDF-1</shortName>
    </recommendedName>
</protein>
<accession>P20863</accession>
<accession>Q6AXH1</accession>
<reference key="1">
    <citation type="journal article" date="1990" name="Mol. Endocrinol.">
        <title>Identification of a novel member (GDF-1) of the transforming growth factor-beta superfamily.</title>
        <authorList>
            <person name="Lee S.-J."/>
        </authorList>
    </citation>
    <scope>NUCLEOTIDE SEQUENCE [MRNA]</scope>
</reference>
<reference key="2">
    <citation type="journal article" date="1991" name="Proc. Natl. Acad. Sci. U.S.A.">
        <title>Expression of growth/differentiation factor 1 in the nervous system: conservation of a bicistronic structure.</title>
        <authorList>
            <person name="Lee S.-J."/>
        </authorList>
    </citation>
    <scope>NUCLEOTIDE SEQUENCE [MRNA]</scope>
</reference>
<reference key="3">
    <citation type="journal article" date="2004" name="Genome Res.">
        <title>The status, quality, and expansion of the NIH full-length cDNA project: the Mammalian Gene Collection (MGC).</title>
        <authorList>
            <consortium name="The MGC Project Team"/>
        </authorList>
    </citation>
    <scope>NUCLEOTIDE SEQUENCE [LARGE SCALE MRNA]</scope>
    <source>
        <strain>C57BL/6J</strain>
        <tissue>Brain</tissue>
    </source>
</reference>
<proteinExistence type="evidence at transcript level"/>
<evidence type="ECO:0000250" key="1"/>
<evidence type="ECO:0000255" key="2"/>
<evidence type="ECO:0000305" key="3"/>
<sequence length="357" mass="38660">MLPVCHRFCDHLLLLLLLPSTTLAPAPASMGPAAALLQVLGLPEAPRSVPTHRPVPPVMWRLFRRRDPQEARVGRPLRPCHVEELGVAGNIVRHIPDSGLSSRPAQPARTSGLCPEWTVVFDLSNVEPTERPTRARLELRLEAESEDTGGWELSVALWADAEHPGPELLRVPAPPGVLLRADLLGTAVAANASVPCTVRLALSLHPGATAACGRLAEASLLLVTLDPRLCPLPRLRRHTEPRVEVGPVGTCRTRRLHVSFREVGWHRWVIAPRGFLANFCQGTCALPETLRGPGGPPALNHAVLRALMHAAAPTPGAGSPCCVPERLSPISVLFFDNSDNVVLRHYEDMVVDECGCR</sequence>